<dbReference type="EC" id="5.4.2.10" evidence="1"/>
<dbReference type="EMBL" id="CP000431">
    <property type="protein sequence ID" value="ABG97950.1"/>
    <property type="molecule type" value="Genomic_DNA"/>
</dbReference>
<dbReference type="RefSeq" id="WP_011598164.1">
    <property type="nucleotide sequence ID" value="NC_008268.1"/>
</dbReference>
<dbReference type="SMR" id="Q0S3D6"/>
<dbReference type="KEGG" id="rha:RHA1_ro06173"/>
<dbReference type="PATRIC" id="fig|101510.16.peg.6221"/>
<dbReference type="eggNOG" id="COG1109">
    <property type="taxonomic scope" value="Bacteria"/>
</dbReference>
<dbReference type="HOGENOM" id="CLU_016950_7_0_11"/>
<dbReference type="OrthoDB" id="9803322at2"/>
<dbReference type="Proteomes" id="UP000008710">
    <property type="component" value="Chromosome"/>
</dbReference>
<dbReference type="GO" id="GO:0005829">
    <property type="term" value="C:cytosol"/>
    <property type="evidence" value="ECO:0007669"/>
    <property type="project" value="TreeGrafter"/>
</dbReference>
<dbReference type="GO" id="GO:0000287">
    <property type="term" value="F:magnesium ion binding"/>
    <property type="evidence" value="ECO:0007669"/>
    <property type="project" value="UniProtKB-UniRule"/>
</dbReference>
<dbReference type="GO" id="GO:0008966">
    <property type="term" value="F:phosphoglucosamine mutase activity"/>
    <property type="evidence" value="ECO:0007669"/>
    <property type="project" value="UniProtKB-UniRule"/>
</dbReference>
<dbReference type="GO" id="GO:0004615">
    <property type="term" value="F:phosphomannomutase activity"/>
    <property type="evidence" value="ECO:0007669"/>
    <property type="project" value="TreeGrafter"/>
</dbReference>
<dbReference type="GO" id="GO:0005975">
    <property type="term" value="P:carbohydrate metabolic process"/>
    <property type="evidence" value="ECO:0007669"/>
    <property type="project" value="InterPro"/>
</dbReference>
<dbReference type="GO" id="GO:0009252">
    <property type="term" value="P:peptidoglycan biosynthetic process"/>
    <property type="evidence" value="ECO:0007669"/>
    <property type="project" value="TreeGrafter"/>
</dbReference>
<dbReference type="GO" id="GO:0006048">
    <property type="term" value="P:UDP-N-acetylglucosamine biosynthetic process"/>
    <property type="evidence" value="ECO:0007669"/>
    <property type="project" value="TreeGrafter"/>
</dbReference>
<dbReference type="CDD" id="cd05802">
    <property type="entry name" value="GlmM"/>
    <property type="match status" value="1"/>
</dbReference>
<dbReference type="FunFam" id="3.30.310.50:FF:000001">
    <property type="entry name" value="Phosphoglucosamine mutase"/>
    <property type="match status" value="1"/>
</dbReference>
<dbReference type="FunFam" id="3.40.120.10:FF:000001">
    <property type="entry name" value="Phosphoglucosamine mutase"/>
    <property type="match status" value="1"/>
</dbReference>
<dbReference type="FunFam" id="3.40.120.10:FF:000003">
    <property type="entry name" value="Phosphoglucosamine mutase"/>
    <property type="match status" value="1"/>
</dbReference>
<dbReference type="Gene3D" id="3.40.120.10">
    <property type="entry name" value="Alpha-D-Glucose-1,6-Bisphosphate, subunit A, domain 3"/>
    <property type="match status" value="3"/>
</dbReference>
<dbReference type="Gene3D" id="3.30.310.50">
    <property type="entry name" value="Alpha-D-phosphohexomutase, C-terminal domain"/>
    <property type="match status" value="1"/>
</dbReference>
<dbReference type="HAMAP" id="MF_01554_B">
    <property type="entry name" value="GlmM_B"/>
    <property type="match status" value="1"/>
</dbReference>
<dbReference type="InterPro" id="IPR005844">
    <property type="entry name" value="A-D-PHexomutase_a/b/a-I"/>
</dbReference>
<dbReference type="InterPro" id="IPR016055">
    <property type="entry name" value="A-D-PHexomutase_a/b/a-I/II/III"/>
</dbReference>
<dbReference type="InterPro" id="IPR005845">
    <property type="entry name" value="A-D-PHexomutase_a/b/a-II"/>
</dbReference>
<dbReference type="InterPro" id="IPR005846">
    <property type="entry name" value="A-D-PHexomutase_a/b/a-III"/>
</dbReference>
<dbReference type="InterPro" id="IPR005843">
    <property type="entry name" value="A-D-PHexomutase_C"/>
</dbReference>
<dbReference type="InterPro" id="IPR036900">
    <property type="entry name" value="A-D-PHexomutase_C_sf"/>
</dbReference>
<dbReference type="InterPro" id="IPR016066">
    <property type="entry name" value="A-D-PHexomutase_CS"/>
</dbReference>
<dbReference type="InterPro" id="IPR005841">
    <property type="entry name" value="Alpha-D-phosphohexomutase_SF"/>
</dbReference>
<dbReference type="InterPro" id="IPR006352">
    <property type="entry name" value="GlmM_bact"/>
</dbReference>
<dbReference type="InterPro" id="IPR050060">
    <property type="entry name" value="Phosphoglucosamine_mutase"/>
</dbReference>
<dbReference type="NCBIfam" id="TIGR01455">
    <property type="entry name" value="glmM"/>
    <property type="match status" value="1"/>
</dbReference>
<dbReference type="PANTHER" id="PTHR42946:SF1">
    <property type="entry name" value="PHOSPHOGLUCOMUTASE (ALPHA-D-GLUCOSE-1,6-BISPHOSPHATE-DEPENDENT)"/>
    <property type="match status" value="1"/>
</dbReference>
<dbReference type="PANTHER" id="PTHR42946">
    <property type="entry name" value="PHOSPHOHEXOSE MUTASE"/>
    <property type="match status" value="1"/>
</dbReference>
<dbReference type="Pfam" id="PF02878">
    <property type="entry name" value="PGM_PMM_I"/>
    <property type="match status" value="1"/>
</dbReference>
<dbReference type="Pfam" id="PF02879">
    <property type="entry name" value="PGM_PMM_II"/>
    <property type="match status" value="1"/>
</dbReference>
<dbReference type="Pfam" id="PF02880">
    <property type="entry name" value="PGM_PMM_III"/>
    <property type="match status" value="1"/>
</dbReference>
<dbReference type="Pfam" id="PF00408">
    <property type="entry name" value="PGM_PMM_IV"/>
    <property type="match status" value="1"/>
</dbReference>
<dbReference type="PRINTS" id="PR00509">
    <property type="entry name" value="PGMPMM"/>
</dbReference>
<dbReference type="SUPFAM" id="SSF55957">
    <property type="entry name" value="Phosphoglucomutase, C-terminal domain"/>
    <property type="match status" value="1"/>
</dbReference>
<dbReference type="SUPFAM" id="SSF53738">
    <property type="entry name" value="Phosphoglucomutase, first 3 domains"/>
    <property type="match status" value="3"/>
</dbReference>
<dbReference type="PROSITE" id="PS00710">
    <property type="entry name" value="PGM_PMM"/>
    <property type="match status" value="1"/>
</dbReference>
<name>GLMM_RHOJR</name>
<organism>
    <name type="scientific">Rhodococcus jostii (strain RHA1)</name>
    <dbReference type="NCBI Taxonomy" id="101510"/>
    <lineage>
        <taxon>Bacteria</taxon>
        <taxon>Bacillati</taxon>
        <taxon>Actinomycetota</taxon>
        <taxon>Actinomycetes</taxon>
        <taxon>Mycobacteriales</taxon>
        <taxon>Nocardiaceae</taxon>
        <taxon>Rhodococcus</taxon>
    </lineage>
</organism>
<feature type="chain" id="PRO_0000301366" description="Phosphoglucosamine mutase">
    <location>
        <begin position="1"/>
        <end position="445"/>
    </location>
</feature>
<feature type="active site" description="Phosphoserine intermediate" evidence="1">
    <location>
        <position position="102"/>
    </location>
</feature>
<feature type="binding site" description="via phosphate group" evidence="1">
    <location>
        <position position="102"/>
    </location>
    <ligand>
        <name>Mg(2+)</name>
        <dbReference type="ChEBI" id="CHEBI:18420"/>
    </ligand>
</feature>
<feature type="binding site" evidence="1">
    <location>
        <position position="241"/>
    </location>
    <ligand>
        <name>Mg(2+)</name>
        <dbReference type="ChEBI" id="CHEBI:18420"/>
    </ligand>
</feature>
<feature type="binding site" evidence="1">
    <location>
        <position position="243"/>
    </location>
    <ligand>
        <name>Mg(2+)</name>
        <dbReference type="ChEBI" id="CHEBI:18420"/>
    </ligand>
</feature>
<feature type="binding site" evidence="1">
    <location>
        <position position="245"/>
    </location>
    <ligand>
        <name>Mg(2+)</name>
        <dbReference type="ChEBI" id="CHEBI:18420"/>
    </ligand>
</feature>
<feature type="modified residue" description="Phosphoserine" evidence="1">
    <location>
        <position position="102"/>
    </location>
</feature>
<protein>
    <recommendedName>
        <fullName evidence="1">Phosphoglucosamine mutase</fullName>
        <ecNumber evidence="1">5.4.2.10</ecNumber>
    </recommendedName>
</protein>
<reference key="1">
    <citation type="journal article" date="2006" name="Proc. Natl. Acad. Sci. U.S.A.">
        <title>The complete genome of Rhodococcus sp. RHA1 provides insights into a catabolic powerhouse.</title>
        <authorList>
            <person name="McLeod M.P."/>
            <person name="Warren R.L."/>
            <person name="Hsiao W.W.L."/>
            <person name="Araki N."/>
            <person name="Myhre M."/>
            <person name="Fernandes C."/>
            <person name="Miyazawa D."/>
            <person name="Wong W."/>
            <person name="Lillquist A.L."/>
            <person name="Wang D."/>
            <person name="Dosanjh M."/>
            <person name="Hara H."/>
            <person name="Petrescu A."/>
            <person name="Morin R.D."/>
            <person name="Yang G."/>
            <person name="Stott J.M."/>
            <person name="Schein J.E."/>
            <person name="Shin H."/>
            <person name="Smailus D."/>
            <person name="Siddiqui A.S."/>
            <person name="Marra M.A."/>
            <person name="Jones S.J.M."/>
            <person name="Holt R."/>
            <person name="Brinkman F.S.L."/>
            <person name="Miyauchi K."/>
            <person name="Fukuda M."/>
            <person name="Davies J.E."/>
            <person name="Mohn W.W."/>
            <person name="Eltis L.D."/>
        </authorList>
    </citation>
    <scope>NUCLEOTIDE SEQUENCE [LARGE SCALE GENOMIC DNA]</scope>
    <source>
        <strain>RHA1</strain>
    </source>
</reference>
<sequence length="445" mass="44858">MGRLFGTDGVRGLANTELTAELALQVASAAATVLASPGSGGRKTAVVGRDPRASGEMLEAAVVAGLTSAGVDVLNVGVLPTPAVAYLTAALDAALGVMISASHNPMPDNGIKIFAAGGHKLDDEVEDRIEAVAAGTTTRRAPTGAGIGRVRTVPDAAERYLQHLATALPNSLDGLTVVVDCAHGAASGVAPAAYRAAGATVVAINAEPDGLNINENCGSTHLESLQKAVVEHGADLGLAHDGDADRCLAVDAAGSLIDGDAIMTVLALGMRDAGELVDNTLVATVMSNLGLHIAMREAGITLVTTAVGDRYVLEGLRSGGFSLGGEQSGHVVFPAFGTTGDGVLTGLRLMGRMAETGQAIADLASAMTALPQVLVNVRVADKRAVAASPVVLDAVVAAERSLGDNGRVLLRPSGTEQLVRVMVEASDIEVARKLADELAGTVASV</sequence>
<gene>
    <name evidence="1" type="primary">glmM</name>
    <name type="ordered locus">RHA1_ro06173</name>
</gene>
<proteinExistence type="inferred from homology"/>
<evidence type="ECO:0000255" key="1">
    <source>
        <dbReference type="HAMAP-Rule" id="MF_01554"/>
    </source>
</evidence>
<accession>Q0S3D6</accession>
<keyword id="KW-0413">Isomerase</keyword>
<keyword id="KW-0460">Magnesium</keyword>
<keyword id="KW-0479">Metal-binding</keyword>
<keyword id="KW-0597">Phosphoprotein</keyword>
<comment type="function">
    <text evidence="1">Catalyzes the conversion of glucosamine-6-phosphate to glucosamine-1-phosphate.</text>
</comment>
<comment type="catalytic activity">
    <reaction evidence="1">
        <text>alpha-D-glucosamine 1-phosphate = D-glucosamine 6-phosphate</text>
        <dbReference type="Rhea" id="RHEA:23424"/>
        <dbReference type="ChEBI" id="CHEBI:58516"/>
        <dbReference type="ChEBI" id="CHEBI:58725"/>
        <dbReference type="EC" id="5.4.2.10"/>
    </reaction>
</comment>
<comment type="cofactor">
    <cofactor evidence="1">
        <name>Mg(2+)</name>
        <dbReference type="ChEBI" id="CHEBI:18420"/>
    </cofactor>
    <text evidence="1">Binds 1 Mg(2+) ion per subunit.</text>
</comment>
<comment type="PTM">
    <text evidence="1">Activated by phosphorylation.</text>
</comment>
<comment type="similarity">
    <text evidence="1">Belongs to the phosphohexose mutase family.</text>
</comment>